<dbReference type="EC" id="1.8.4.11"/>
<dbReference type="EMBL" id="AE005673">
    <property type="protein sequence ID" value="AAK23023.1"/>
    <property type="molecule type" value="Genomic_DNA"/>
</dbReference>
<dbReference type="PIR" id="C87378">
    <property type="entry name" value="C87378"/>
</dbReference>
<dbReference type="RefSeq" id="NP_419855.1">
    <property type="nucleotide sequence ID" value="NC_002696.2"/>
</dbReference>
<dbReference type="RefSeq" id="WP_010918923.1">
    <property type="nucleotide sequence ID" value="NC_002696.2"/>
</dbReference>
<dbReference type="SMR" id="Q9A9E9"/>
<dbReference type="STRING" id="190650.CC_1039"/>
<dbReference type="EnsemblBacteria" id="AAK23023">
    <property type="protein sequence ID" value="AAK23023"/>
    <property type="gene ID" value="CC_1039"/>
</dbReference>
<dbReference type="KEGG" id="ccr:CC_1039"/>
<dbReference type="PATRIC" id="fig|190650.5.peg.1055"/>
<dbReference type="eggNOG" id="COG0225">
    <property type="taxonomic scope" value="Bacteria"/>
</dbReference>
<dbReference type="HOGENOM" id="CLU_031040_10_1_5"/>
<dbReference type="BioCyc" id="CAULO:CC1039-MONOMER"/>
<dbReference type="Proteomes" id="UP000001816">
    <property type="component" value="Chromosome"/>
</dbReference>
<dbReference type="GO" id="GO:0033744">
    <property type="term" value="F:L-methionine:thioredoxin-disulfide S-oxidoreductase activity"/>
    <property type="evidence" value="ECO:0007669"/>
    <property type="project" value="RHEA"/>
</dbReference>
<dbReference type="GO" id="GO:0008113">
    <property type="term" value="F:peptide-methionine (S)-S-oxide reductase activity"/>
    <property type="evidence" value="ECO:0007669"/>
    <property type="project" value="UniProtKB-UniRule"/>
</dbReference>
<dbReference type="GO" id="GO:0036211">
    <property type="term" value="P:protein modification process"/>
    <property type="evidence" value="ECO:0007669"/>
    <property type="project" value="UniProtKB-UniRule"/>
</dbReference>
<dbReference type="Gene3D" id="3.30.1060.10">
    <property type="entry name" value="Peptide methionine sulphoxide reductase MsrA"/>
    <property type="match status" value="1"/>
</dbReference>
<dbReference type="HAMAP" id="MF_01401">
    <property type="entry name" value="MsrA"/>
    <property type="match status" value="1"/>
</dbReference>
<dbReference type="InterPro" id="IPR002569">
    <property type="entry name" value="Met_Sox_Rdtase_MsrA_dom"/>
</dbReference>
<dbReference type="InterPro" id="IPR036509">
    <property type="entry name" value="Met_Sox_Rdtase_MsrA_sf"/>
</dbReference>
<dbReference type="NCBIfam" id="TIGR00401">
    <property type="entry name" value="msrA"/>
    <property type="match status" value="1"/>
</dbReference>
<dbReference type="PANTHER" id="PTHR43774">
    <property type="entry name" value="PEPTIDE METHIONINE SULFOXIDE REDUCTASE"/>
    <property type="match status" value="1"/>
</dbReference>
<dbReference type="PANTHER" id="PTHR43774:SF1">
    <property type="entry name" value="PEPTIDE METHIONINE SULFOXIDE REDUCTASE MSRA 2"/>
    <property type="match status" value="1"/>
</dbReference>
<dbReference type="Pfam" id="PF01625">
    <property type="entry name" value="PMSR"/>
    <property type="match status" value="1"/>
</dbReference>
<dbReference type="SUPFAM" id="SSF55068">
    <property type="entry name" value="Peptide methionine sulfoxide reductase"/>
    <property type="match status" value="1"/>
</dbReference>
<reference key="1">
    <citation type="journal article" date="2001" name="Proc. Natl. Acad. Sci. U.S.A.">
        <title>Complete genome sequence of Caulobacter crescentus.</title>
        <authorList>
            <person name="Nierman W.C."/>
            <person name="Feldblyum T.V."/>
            <person name="Laub M.T."/>
            <person name="Paulsen I.T."/>
            <person name="Nelson K.E."/>
            <person name="Eisen J.A."/>
            <person name="Heidelberg J.F."/>
            <person name="Alley M.R.K."/>
            <person name="Ohta N."/>
            <person name="Maddock J.R."/>
            <person name="Potocka I."/>
            <person name="Nelson W.C."/>
            <person name="Newton A."/>
            <person name="Stephens C."/>
            <person name="Phadke N.D."/>
            <person name="Ely B."/>
            <person name="DeBoy R.T."/>
            <person name="Dodson R.J."/>
            <person name="Durkin A.S."/>
            <person name="Gwinn M.L."/>
            <person name="Haft D.H."/>
            <person name="Kolonay J.F."/>
            <person name="Smit J."/>
            <person name="Craven M.B."/>
            <person name="Khouri H.M."/>
            <person name="Shetty J."/>
            <person name="Berry K.J."/>
            <person name="Utterback T.R."/>
            <person name="Tran K."/>
            <person name="Wolf A.M."/>
            <person name="Vamathevan J.J."/>
            <person name="Ermolaeva M.D."/>
            <person name="White O."/>
            <person name="Salzberg S.L."/>
            <person name="Venter J.C."/>
            <person name="Shapiro L."/>
            <person name="Fraser C.M."/>
        </authorList>
    </citation>
    <scope>NUCLEOTIDE SEQUENCE [LARGE SCALE GENOMIC DNA]</scope>
    <source>
        <strain>ATCC 19089 / CIP 103742 / CB 15</strain>
    </source>
</reference>
<keyword id="KW-0560">Oxidoreductase</keyword>
<keyword id="KW-1185">Reference proteome</keyword>
<comment type="function">
    <text evidence="1">Has an important function as a repair enzyme for proteins that have been inactivated by oxidation. Catalyzes the reversible oxidation-reduction of methionine sulfoxide in proteins to methionine (By similarity).</text>
</comment>
<comment type="catalytic activity">
    <reaction>
        <text>L-methionyl-[protein] + [thioredoxin]-disulfide + H2O = L-methionyl-(S)-S-oxide-[protein] + [thioredoxin]-dithiol</text>
        <dbReference type="Rhea" id="RHEA:14217"/>
        <dbReference type="Rhea" id="RHEA-COMP:10698"/>
        <dbReference type="Rhea" id="RHEA-COMP:10700"/>
        <dbReference type="Rhea" id="RHEA-COMP:12313"/>
        <dbReference type="Rhea" id="RHEA-COMP:12315"/>
        <dbReference type="ChEBI" id="CHEBI:15377"/>
        <dbReference type="ChEBI" id="CHEBI:16044"/>
        <dbReference type="ChEBI" id="CHEBI:29950"/>
        <dbReference type="ChEBI" id="CHEBI:44120"/>
        <dbReference type="ChEBI" id="CHEBI:50058"/>
        <dbReference type="EC" id="1.8.4.11"/>
    </reaction>
</comment>
<comment type="catalytic activity">
    <reaction>
        <text>[thioredoxin]-disulfide + L-methionine + H2O = L-methionine (S)-S-oxide + [thioredoxin]-dithiol</text>
        <dbReference type="Rhea" id="RHEA:19993"/>
        <dbReference type="Rhea" id="RHEA-COMP:10698"/>
        <dbReference type="Rhea" id="RHEA-COMP:10700"/>
        <dbReference type="ChEBI" id="CHEBI:15377"/>
        <dbReference type="ChEBI" id="CHEBI:29950"/>
        <dbReference type="ChEBI" id="CHEBI:50058"/>
        <dbReference type="ChEBI" id="CHEBI:57844"/>
        <dbReference type="ChEBI" id="CHEBI:58772"/>
        <dbReference type="EC" id="1.8.4.11"/>
    </reaction>
</comment>
<comment type="similarity">
    <text evidence="2">Belongs to the MsrA Met sulfoxide reductase family.</text>
</comment>
<sequence length="196" mass="21916">MRRLIVLFAAALAVLGATAPALAAPKTETAVFAGGCFWCMEHDMQGVPGVLKVESGYTGGHLKNPTYRDVTSETSGHYEAVRVTYDPAKLDYGFLLYRYWRLVDPTDDGGQFCDRGPSYRPAVFVTPAQRPIAEKSRTEAAKRLKTGTMKTQILPAQTFYLAEEYHRDYAKRNKLNYFAYRTGCGRDARLKQVWGG</sequence>
<organism>
    <name type="scientific">Caulobacter vibrioides (strain ATCC 19089 / CIP 103742 / CB 15)</name>
    <name type="common">Caulobacter crescentus</name>
    <dbReference type="NCBI Taxonomy" id="190650"/>
    <lineage>
        <taxon>Bacteria</taxon>
        <taxon>Pseudomonadati</taxon>
        <taxon>Pseudomonadota</taxon>
        <taxon>Alphaproteobacteria</taxon>
        <taxon>Caulobacterales</taxon>
        <taxon>Caulobacteraceae</taxon>
        <taxon>Caulobacter</taxon>
    </lineage>
</organism>
<protein>
    <recommendedName>
        <fullName>Peptide methionine sulfoxide reductase MsrA 2</fullName>
        <shortName>Protein-methionine-S-oxide reductase 2</shortName>
        <ecNumber>1.8.4.11</ecNumber>
    </recommendedName>
    <alternativeName>
        <fullName>Peptide-methionine (S)-S-oxide reductase 2</fullName>
        <shortName>Peptide Met(O) reductase 2</shortName>
    </alternativeName>
</protein>
<evidence type="ECO:0000250" key="1"/>
<evidence type="ECO:0000305" key="2"/>
<feature type="chain" id="PRO_0000138537" description="Peptide methionine sulfoxide reductase MsrA 2">
    <location>
        <begin position="1"/>
        <end position="196"/>
    </location>
</feature>
<feature type="active site" evidence="1">
    <location>
        <position position="36"/>
    </location>
</feature>
<name>MSRA2_CAUVC</name>
<proteinExistence type="inferred from homology"/>
<accession>Q9A9E9</accession>
<gene>
    <name type="primary">msrA2</name>
    <name type="ordered locus">CC_1039</name>
</gene>